<reference key="1">
    <citation type="journal article" date="2017" name="Genome Biol.">
        <title>Comparative genomics reveals high biological diversity and specific adaptations in the industrially and medically important fungal genus Aspergillus.</title>
        <authorList>
            <person name="de Vries R.P."/>
            <person name="Riley R."/>
            <person name="Wiebenga A."/>
            <person name="Aguilar-Osorio G."/>
            <person name="Amillis S."/>
            <person name="Uchima C.A."/>
            <person name="Anderluh G."/>
            <person name="Asadollahi M."/>
            <person name="Askin M."/>
            <person name="Barry K."/>
            <person name="Battaglia E."/>
            <person name="Bayram O."/>
            <person name="Benocci T."/>
            <person name="Braus-Stromeyer S.A."/>
            <person name="Caldana C."/>
            <person name="Canovas D."/>
            <person name="Cerqueira G.C."/>
            <person name="Chen F."/>
            <person name="Chen W."/>
            <person name="Choi C."/>
            <person name="Clum A."/>
            <person name="Dos Santos R.A."/>
            <person name="Damasio A.R."/>
            <person name="Diallinas G."/>
            <person name="Emri T."/>
            <person name="Fekete E."/>
            <person name="Flipphi M."/>
            <person name="Freyberg S."/>
            <person name="Gallo A."/>
            <person name="Gournas C."/>
            <person name="Habgood R."/>
            <person name="Hainaut M."/>
            <person name="Harispe M.L."/>
            <person name="Henrissat B."/>
            <person name="Hilden K.S."/>
            <person name="Hope R."/>
            <person name="Hossain A."/>
            <person name="Karabika E."/>
            <person name="Karaffa L."/>
            <person name="Karanyi Z."/>
            <person name="Krasevec N."/>
            <person name="Kuo A."/>
            <person name="Kusch H."/>
            <person name="LaButti K."/>
            <person name="Lagendijk E.L."/>
            <person name="Lapidus A."/>
            <person name="Levasseur A."/>
            <person name="Lindquist E."/>
            <person name="Lipzen A."/>
            <person name="Logrieco A.F."/>
            <person name="MacCabe A."/>
            <person name="Maekelae M.R."/>
            <person name="Malavazi I."/>
            <person name="Melin P."/>
            <person name="Meyer V."/>
            <person name="Mielnichuk N."/>
            <person name="Miskei M."/>
            <person name="Molnar A.P."/>
            <person name="Mule G."/>
            <person name="Ngan C.Y."/>
            <person name="Orejas M."/>
            <person name="Orosz E."/>
            <person name="Ouedraogo J.P."/>
            <person name="Overkamp K.M."/>
            <person name="Park H.-S."/>
            <person name="Perrone G."/>
            <person name="Piumi F."/>
            <person name="Punt P.J."/>
            <person name="Ram A.F."/>
            <person name="Ramon A."/>
            <person name="Rauscher S."/>
            <person name="Record E."/>
            <person name="Riano-Pachon D.M."/>
            <person name="Robert V."/>
            <person name="Roehrig J."/>
            <person name="Ruller R."/>
            <person name="Salamov A."/>
            <person name="Salih N.S."/>
            <person name="Samson R.A."/>
            <person name="Sandor E."/>
            <person name="Sanguinetti M."/>
            <person name="Schuetze T."/>
            <person name="Sepcic K."/>
            <person name="Shelest E."/>
            <person name="Sherlock G."/>
            <person name="Sophianopoulou V."/>
            <person name="Squina F.M."/>
            <person name="Sun H."/>
            <person name="Susca A."/>
            <person name="Todd R.B."/>
            <person name="Tsang A."/>
            <person name="Unkles S.E."/>
            <person name="van de Wiele N."/>
            <person name="van Rossen-Uffink D."/>
            <person name="Oliveira J.V."/>
            <person name="Vesth T.C."/>
            <person name="Visser J."/>
            <person name="Yu J.-H."/>
            <person name="Zhou M."/>
            <person name="Andersen M.R."/>
            <person name="Archer D.B."/>
            <person name="Baker S.E."/>
            <person name="Benoit I."/>
            <person name="Brakhage A.A."/>
            <person name="Braus G.H."/>
            <person name="Fischer R."/>
            <person name="Frisvad J.C."/>
            <person name="Goldman G.H."/>
            <person name="Houbraken J."/>
            <person name="Oakley B."/>
            <person name="Pocsi I."/>
            <person name="Scazzocchio C."/>
            <person name="Seiboth B."/>
            <person name="vanKuyk P.A."/>
            <person name="Wortman J."/>
            <person name="Dyer P.S."/>
            <person name="Grigoriev I.V."/>
        </authorList>
    </citation>
    <scope>NUCLEOTIDE SEQUENCE [LARGE SCALE GENOMIC DNA]</scope>
    <source>
        <strain>ATCC 16872 / CBS 172.66 / WB 5094</strain>
    </source>
</reference>
<reference key="2">
    <citation type="journal article" date="2019" name="Angew. Chem. Int. Ed.">
        <title>The biosynthesis of norsesquiterpene aculenes requires three cytochrome P450 enzymes to catalyze a stepwise demethylation process.</title>
        <authorList>
            <person name="Lee C.F."/>
            <person name="Chen L.X."/>
            <person name="Chiang C.Y."/>
            <person name="Lai C.Y."/>
            <person name="Lin H.C."/>
        </authorList>
    </citation>
    <scope>FUNCTION</scope>
    <scope>PATHWAY</scope>
</reference>
<keyword id="KW-0031">Aminopeptidase</keyword>
<keyword id="KW-0963">Cytoplasm</keyword>
<keyword id="KW-0378">Hydrolase</keyword>
<keyword id="KW-0645">Protease</keyword>
<keyword id="KW-1185">Reference proteome</keyword>
<name>ANEH_ASPA1</name>
<comment type="function">
    <text evidence="3">Proline iminopeptidase; part of the gene cluster that mediates the biosynthesis of aculenes, a unique type of norsesquiterpenes that contain a nordaucane skeleton linked to an L-proline moiety and are of mixed biosynthetic origin (PubMed:31618514). The pathway begins with the synthesis of dauca-4,7-diene by the terpene cyclase aneC using farnesyl pyrophosphate (FPP) as substrate (PubMed:31618514). The cytochrome P450 monooxygenase aneF then performs the initial oxidation at C-12 of dauca-4,7-diene to yield asperaculane D (PubMed:31618514). Asperaculane D is substrate of the cytochrome P450 monooxygenase aneD for C-10 hydroxylation to yield asperaculane E (PubMed:31618514). The cytochrome P450 monooxygenase aneG then converts asperaculane E into aculene D via C-2 oxidation (PubMed:31618514). The monomodular nonribosomal peptide synthtase aneB adenylates L-proline and the thiohydrolase aneE transfers this activated L-proline derivative to aculenes D and C to produce respectively aculenes B and A (PubMed:31618514). The dioxygenase aneA converts aculene D into aculene C, and aculene B into aculene A by introducing the 5,6-alkene moiety (PubMed:31618514). Asperculanes A, B, C and F, as well as 14-prolyl asperculane C, might be shunt products of the pathway (PubMed:31618514).</text>
</comment>
<comment type="catalytic activity">
    <reaction>
        <text>Release of N-terminal proline from a peptide.</text>
        <dbReference type="EC" id="3.4.11.5"/>
    </reaction>
</comment>
<comment type="pathway">
    <text evidence="6">Secondary metabolite biosynthesis.</text>
</comment>
<comment type="subunit">
    <text evidence="1">Homooligomer.</text>
</comment>
<comment type="subcellular location">
    <subcellularLocation>
        <location evidence="1">Cytoplasm</location>
    </subcellularLocation>
</comment>
<comment type="similarity">
    <text evidence="5">Belongs to the peptidase S33 family.</text>
</comment>
<gene>
    <name evidence="4" type="primary">aneH</name>
    <name type="ORF">ASPACDRAFT_43554</name>
</gene>
<feature type="chain" id="PRO_0000449097" description="Proline iminopeptidase aneH">
    <location>
        <begin position="1"/>
        <end position="448"/>
    </location>
</feature>
<feature type="domain" description="AB hydrolase-1" evidence="2">
    <location>
        <begin position="64"/>
        <end position="191"/>
    </location>
</feature>
<feature type="active site" description="Nucleophile" evidence="1">
    <location>
        <position position="164"/>
    </location>
</feature>
<feature type="active site" evidence="1">
    <location>
        <position position="397"/>
    </location>
</feature>
<feature type="active site" description="Proton donor" evidence="1">
    <location>
        <position position="425"/>
    </location>
</feature>
<organism>
    <name type="scientific">Aspergillus aculeatus (strain ATCC 16872 / CBS 172.66 / WB 5094)</name>
    <dbReference type="NCBI Taxonomy" id="690307"/>
    <lineage>
        <taxon>Eukaryota</taxon>
        <taxon>Fungi</taxon>
        <taxon>Dikarya</taxon>
        <taxon>Ascomycota</taxon>
        <taxon>Pezizomycotina</taxon>
        <taxon>Eurotiomycetes</taxon>
        <taxon>Eurotiomycetidae</taxon>
        <taxon>Eurotiales</taxon>
        <taxon>Aspergillaceae</taxon>
        <taxon>Aspergillus</taxon>
        <taxon>Aspergillus subgen. Circumdati</taxon>
    </lineage>
</organism>
<accession>A0A1L9WUM2</accession>
<proteinExistence type="inferred from homology"/>
<sequence>MAVEQNIAPAKLIDRFSHDGPGKCRTSEWRFEVPLNHSKPDEGTVRLFARSIHCVLGVDDPELPWMLYLQGGPGLGCKTPLEYAWLPSILEKGYRVLFLDERGTGQSSPITAKTLAQQGDHKKQADLLKRFRADNIVRDCEAVRKHLYQDAPADQSKWSVMAASFGGFCAISYVSMFPNSLVEVFIGGGPCPMVNEPGQVIPRLFAVAARRNEVYYKKYPEDVGRVKRIIKYLKENKVALSKGTLTPERFQQLGVMLGLHGGIDYIHGVVQRTDNDLDMFKFLTAPTLDLIENSGMAHNVIYSLLQEPMYCQGKAGGWCADKCRKADPRFSLNERNAQIWFTGEAIFSDMFESYDELKDLKPVAELLARSSDWGQLYNEAQLARNEVPVYVATAVEDMYVSYDLGCHTASKVKNLQQVVNNTWYHDAVETKASEVMPALFALKEDRID</sequence>
<evidence type="ECO:0000250" key="1">
    <source>
        <dbReference type="UniProtKB" id="P52279"/>
    </source>
</evidence>
<evidence type="ECO:0000255" key="2"/>
<evidence type="ECO:0000269" key="3">
    <source>
    </source>
</evidence>
<evidence type="ECO:0000303" key="4">
    <source>
    </source>
</evidence>
<evidence type="ECO:0000305" key="5"/>
<evidence type="ECO:0000305" key="6">
    <source>
    </source>
</evidence>
<dbReference type="EC" id="3.4.11.5" evidence="1"/>
<dbReference type="EMBL" id="KV878977">
    <property type="protein sequence ID" value="OJJ99919.1"/>
    <property type="molecule type" value="Genomic_DNA"/>
</dbReference>
<dbReference type="RefSeq" id="XP_020056259.1">
    <property type="nucleotide sequence ID" value="XM_020201280.1"/>
</dbReference>
<dbReference type="SMR" id="A0A1L9WUM2"/>
<dbReference type="STRING" id="690307.A0A1L9WUM2"/>
<dbReference type="ESTHER" id="aspa1-aneh">
    <property type="family name" value="Proline_iminopeptidase"/>
</dbReference>
<dbReference type="GeneID" id="30975094"/>
<dbReference type="VEuPathDB" id="FungiDB:ASPACDRAFT_43554"/>
<dbReference type="OMA" id="HESIYGQ"/>
<dbReference type="OrthoDB" id="1898734at2759"/>
<dbReference type="Proteomes" id="UP000184546">
    <property type="component" value="Unassembled WGS sequence"/>
</dbReference>
<dbReference type="GO" id="GO:0005737">
    <property type="term" value="C:cytoplasm"/>
    <property type="evidence" value="ECO:0007669"/>
    <property type="project" value="UniProtKB-SubCell"/>
</dbReference>
<dbReference type="GO" id="GO:0004177">
    <property type="term" value="F:aminopeptidase activity"/>
    <property type="evidence" value="ECO:0007669"/>
    <property type="project" value="UniProtKB-KW"/>
</dbReference>
<dbReference type="GO" id="GO:0006508">
    <property type="term" value="P:proteolysis"/>
    <property type="evidence" value="ECO:0007669"/>
    <property type="project" value="UniProtKB-KW"/>
</dbReference>
<dbReference type="Gene3D" id="3.40.50.1820">
    <property type="entry name" value="alpha/beta hydrolase"/>
    <property type="match status" value="1"/>
</dbReference>
<dbReference type="InterPro" id="IPR000073">
    <property type="entry name" value="AB_hydrolase_1"/>
</dbReference>
<dbReference type="InterPro" id="IPR029058">
    <property type="entry name" value="AB_hydrolase_fold"/>
</dbReference>
<dbReference type="InterPro" id="IPR002410">
    <property type="entry name" value="Peptidase_S33"/>
</dbReference>
<dbReference type="InterPro" id="IPR051601">
    <property type="entry name" value="Serine_prot/Carboxylest_S33"/>
</dbReference>
<dbReference type="PANTHER" id="PTHR43248">
    <property type="entry name" value="2-SUCCINYL-6-HYDROXY-2,4-CYCLOHEXADIENE-1-CARBOXYLATE SYNTHASE"/>
    <property type="match status" value="1"/>
</dbReference>
<dbReference type="PANTHER" id="PTHR43248:SF2">
    <property type="entry name" value="PROLYL AMINOPEPTIDASE"/>
    <property type="match status" value="1"/>
</dbReference>
<dbReference type="Pfam" id="PF00561">
    <property type="entry name" value="Abhydrolase_1"/>
    <property type="match status" value="1"/>
</dbReference>
<dbReference type="PRINTS" id="PR00793">
    <property type="entry name" value="PROAMNOPTASE"/>
</dbReference>
<dbReference type="SUPFAM" id="SSF53474">
    <property type="entry name" value="alpha/beta-Hydrolases"/>
    <property type="match status" value="1"/>
</dbReference>
<protein>
    <recommendedName>
        <fullName evidence="4">Proline iminopeptidase aneH</fullName>
        <shortName evidence="4">PIP</shortName>
        <ecNumber evidence="1">3.4.11.5</ecNumber>
    </recommendedName>
    <alternativeName>
        <fullName evidence="4">Aculenes biosynthesis cluster protein HA</fullName>
    </alternativeName>
</protein>